<dbReference type="EMBL" id="CP001056">
    <property type="protein sequence ID" value="ACD23645.1"/>
    <property type="molecule type" value="Genomic_DNA"/>
</dbReference>
<dbReference type="SMR" id="B2TIH4"/>
<dbReference type="KEGG" id="cbk:CLL_A0237"/>
<dbReference type="PATRIC" id="fig|935198.13.peg.212"/>
<dbReference type="HOGENOM" id="CLU_122625_1_3_9"/>
<dbReference type="Proteomes" id="UP000001195">
    <property type="component" value="Chromosome"/>
</dbReference>
<dbReference type="GO" id="GO:1990904">
    <property type="term" value="C:ribonucleoprotein complex"/>
    <property type="evidence" value="ECO:0007669"/>
    <property type="project" value="UniProtKB-KW"/>
</dbReference>
<dbReference type="GO" id="GO:0005840">
    <property type="term" value="C:ribosome"/>
    <property type="evidence" value="ECO:0007669"/>
    <property type="project" value="UniProtKB-KW"/>
</dbReference>
<dbReference type="GO" id="GO:0003735">
    <property type="term" value="F:structural constituent of ribosome"/>
    <property type="evidence" value="ECO:0007669"/>
    <property type="project" value="InterPro"/>
</dbReference>
<dbReference type="GO" id="GO:0000049">
    <property type="term" value="F:tRNA binding"/>
    <property type="evidence" value="ECO:0007669"/>
    <property type="project" value="UniProtKB-UniRule"/>
</dbReference>
<dbReference type="GO" id="GO:0006412">
    <property type="term" value="P:translation"/>
    <property type="evidence" value="ECO:0007669"/>
    <property type="project" value="UniProtKB-UniRule"/>
</dbReference>
<dbReference type="FunFam" id="3.30.70.600:FF:000001">
    <property type="entry name" value="30S ribosomal protein S10"/>
    <property type="match status" value="1"/>
</dbReference>
<dbReference type="Gene3D" id="3.30.70.600">
    <property type="entry name" value="Ribosomal protein S10 domain"/>
    <property type="match status" value="1"/>
</dbReference>
<dbReference type="HAMAP" id="MF_00508">
    <property type="entry name" value="Ribosomal_uS10"/>
    <property type="match status" value="1"/>
</dbReference>
<dbReference type="InterPro" id="IPR001848">
    <property type="entry name" value="Ribosomal_uS10"/>
</dbReference>
<dbReference type="InterPro" id="IPR018268">
    <property type="entry name" value="Ribosomal_uS10_CS"/>
</dbReference>
<dbReference type="InterPro" id="IPR027486">
    <property type="entry name" value="Ribosomal_uS10_dom"/>
</dbReference>
<dbReference type="InterPro" id="IPR036838">
    <property type="entry name" value="Ribosomal_uS10_dom_sf"/>
</dbReference>
<dbReference type="NCBIfam" id="NF001861">
    <property type="entry name" value="PRK00596.1"/>
    <property type="match status" value="1"/>
</dbReference>
<dbReference type="NCBIfam" id="TIGR01049">
    <property type="entry name" value="rpsJ_bact"/>
    <property type="match status" value="1"/>
</dbReference>
<dbReference type="PANTHER" id="PTHR11700">
    <property type="entry name" value="30S RIBOSOMAL PROTEIN S10 FAMILY MEMBER"/>
    <property type="match status" value="1"/>
</dbReference>
<dbReference type="Pfam" id="PF00338">
    <property type="entry name" value="Ribosomal_S10"/>
    <property type="match status" value="1"/>
</dbReference>
<dbReference type="PRINTS" id="PR00971">
    <property type="entry name" value="RIBOSOMALS10"/>
</dbReference>
<dbReference type="SMART" id="SM01403">
    <property type="entry name" value="Ribosomal_S10"/>
    <property type="match status" value="1"/>
</dbReference>
<dbReference type="SUPFAM" id="SSF54999">
    <property type="entry name" value="Ribosomal protein S10"/>
    <property type="match status" value="1"/>
</dbReference>
<dbReference type="PROSITE" id="PS00361">
    <property type="entry name" value="RIBOSOMAL_S10"/>
    <property type="match status" value="1"/>
</dbReference>
<sequence length="102" mass="11510">MSKQKIRIRLKAFDHTILDQSAEKIVETAKTSGAKVVGPVPLPTEKDVVTILRAVHKYKDSREQFEIRTHKRLIDIVNPSPKTVDALMRLNLPAGVDIEIKL</sequence>
<name>RS10_CLOBB</name>
<reference key="1">
    <citation type="submission" date="2008-04" db="EMBL/GenBank/DDBJ databases">
        <title>Complete sequence of Clostridium botulinum strain Eklund.</title>
        <authorList>
            <person name="Brinkac L.M."/>
            <person name="Brown J.L."/>
            <person name="Bruce D."/>
            <person name="Detter C."/>
            <person name="Munk C."/>
            <person name="Smith L.A."/>
            <person name="Smith T.J."/>
            <person name="Sutton G."/>
            <person name="Brettin T.S."/>
        </authorList>
    </citation>
    <scope>NUCLEOTIDE SEQUENCE [LARGE SCALE GENOMIC DNA]</scope>
    <source>
        <strain>Eklund 17B / Type B</strain>
    </source>
</reference>
<proteinExistence type="inferred from homology"/>
<protein>
    <recommendedName>
        <fullName evidence="1">Small ribosomal subunit protein uS10</fullName>
    </recommendedName>
    <alternativeName>
        <fullName evidence="2">30S ribosomal protein S10</fullName>
    </alternativeName>
</protein>
<gene>
    <name evidence="1" type="primary">rpsJ</name>
    <name type="ordered locus">CLL_A0237</name>
</gene>
<comment type="function">
    <text evidence="1">Involved in the binding of tRNA to the ribosomes.</text>
</comment>
<comment type="subunit">
    <text evidence="1">Part of the 30S ribosomal subunit.</text>
</comment>
<comment type="similarity">
    <text evidence="1">Belongs to the universal ribosomal protein uS10 family.</text>
</comment>
<evidence type="ECO:0000255" key="1">
    <source>
        <dbReference type="HAMAP-Rule" id="MF_00508"/>
    </source>
</evidence>
<evidence type="ECO:0000305" key="2"/>
<keyword id="KW-0687">Ribonucleoprotein</keyword>
<keyword id="KW-0689">Ribosomal protein</keyword>
<accession>B2TIH4</accession>
<feature type="chain" id="PRO_1000127104" description="Small ribosomal subunit protein uS10">
    <location>
        <begin position="1"/>
        <end position="102"/>
    </location>
</feature>
<organism>
    <name type="scientific">Clostridium botulinum (strain Eklund 17B / Type B)</name>
    <dbReference type="NCBI Taxonomy" id="935198"/>
    <lineage>
        <taxon>Bacteria</taxon>
        <taxon>Bacillati</taxon>
        <taxon>Bacillota</taxon>
        <taxon>Clostridia</taxon>
        <taxon>Eubacteriales</taxon>
        <taxon>Clostridiaceae</taxon>
        <taxon>Clostridium</taxon>
    </lineage>
</organism>